<comment type="function">
    <text evidence="1">Catalyzes the NADPH-dependent reduction of N-acetyl-5-glutamyl phosphate to yield N-acetyl-L-glutamate 5-semialdehyde.</text>
</comment>
<comment type="catalytic activity">
    <reaction evidence="1">
        <text>N-acetyl-L-glutamate 5-semialdehyde + phosphate + NADP(+) = N-acetyl-L-glutamyl 5-phosphate + NADPH + H(+)</text>
        <dbReference type="Rhea" id="RHEA:21588"/>
        <dbReference type="ChEBI" id="CHEBI:15378"/>
        <dbReference type="ChEBI" id="CHEBI:29123"/>
        <dbReference type="ChEBI" id="CHEBI:43474"/>
        <dbReference type="ChEBI" id="CHEBI:57783"/>
        <dbReference type="ChEBI" id="CHEBI:57936"/>
        <dbReference type="ChEBI" id="CHEBI:58349"/>
        <dbReference type="EC" id="1.2.1.38"/>
    </reaction>
</comment>
<comment type="pathway">
    <text evidence="1">Amino-acid biosynthesis; L-arginine biosynthesis; N(2)-acetyl-L-ornithine from L-glutamate: step 3/4.</text>
</comment>
<comment type="subcellular location">
    <subcellularLocation>
        <location evidence="1">Cytoplasm</location>
    </subcellularLocation>
</comment>
<comment type="similarity">
    <text evidence="1">Belongs to the NAGSA dehydrogenase family. Type 2 subfamily.</text>
</comment>
<protein>
    <recommendedName>
        <fullName evidence="1">N-acetyl-gamma-glutamyl-phosphate reductase</fullName>
        <shortName evidence="1">AGPR</shortName>
        <ecNumber evidence="1">1.2.1.38</ecNumber>
    </recommendedName>
    <alternativeName>
        <fullName evidence="1">N-acetyl-glutamate semialdehyde dehydrogenase</fullName>
        <shortName evidence="1">NAGSA dehydrogenase</shortName>
    </alternativeName>
</protein>
<reference key="1">
    <citation type="journal article" date="1999" name="Science">
        <title>Genome sequence of the radioresistant bacterium Deinococcus radiodurans R1.</title>
        <authorList>
            <person name="White O."/>
            <person name="Eisen J.A."/>
            <person name="Heidelberg J.F."/>
            <person name="Hickey E.K."/>
            <person name="Peterson J.D."/>
            <person name="Dodson R.J."/>
            <person name="Haft D.H."/>
            <person name="Gwinn M.L."/>
            <person name="Nelson W.C."/>
            <person name="Richardson D.L."/>
            <person name="Moffat K.S."/>
            <person name="Qin H."/>
            <person name="Jiang L."/>
            <person name="Pamphile W."/>
            <person name="Crosby M."/>
            <person name="Shen M."/>
            <person name="Vamathevan J.J."/>
            <person name="Lam P."/>
            <person name="McDonald L.A."/>
            <person name="Utterback T.R."/>
            <person name="Zalewski C."/>
            <person name="Makarova K.S."/>
            <person name="Aravind L."/>
            <person name="Daly M.J."/>
            <person name="Minton K.W."/>
            <person name="Fleischmann R.D."/>
            <person name="Ketchum K.A."/>
            <person name="Nelson K.E."/>
            <person name="Salzberg S.L."/>
            <person name="Smith H.O."/>
            <person name="Venter J.C."/>
            <person name="Fraser C.M."/>
        </authorList>
    </citation>
    <scope>NUCLEOTIDE SEQUENCE [LARGE SCALE GENOMIC DNA]</scope>
    <source>
        <strain>ATCC 13939 / DSM 20539 / JCM 16871 / CCUG 27074 / LMG 4051 / NBRC 15346 / NCIMB 9279 / VKM B-1422 / R1</strain>
    </source>
</reference>
<sequence length="306" mass="32656">MNKPKIFIDGEAGTTGLQIRERLAGRSDLELLSIDPVRRKDSAARAELLNAADVSILCLHDDAAREAVSLTTNPASRLLDASTAHRIHPDWVFGFPELSAEQPEKIRQARYVANPGCYSTGAIALLAPLTGRGLLPADFPVHIQGYSGYTGGGRALVDAHEQGSAHPSKGAFISYGLTLEHKHLPETMVYGGLTRKPVFTPNVGGWAQGMTVTVPLHLAELGVSAEALHAALKEHYAGQQYVKVFELADNPEILDPQTLNGTNNLELFVYPAADGERALLAARLDNLGKGASGAAVQNLELMLGLS</sequence>
<name>ARGC_DEIRA</name>
<evidence type="ECO:0000255" key="1">
    <source>
        <dbReference type="HAMAP-Rule" id="MF_01110"/>
    </source>
</evidence>
<organism>
    <name type="scientific">Deinococcus radiodurans (strain ATCC 13939 / DSM 20539 / JCM 16871 / CCUG 27074 / LMG 4051 / NBRC 15346 / NCIMB 9279 / VKM B-1422 / R1)</name>
    <dbReference type="NCBI Taxonomy" id="243230"/>
    <lineage>
        <taxon>Bacteria</taxon>
        <taxon>Thermotogati</taxon>
        <taxon>Deinococcota</taxon>
        <taxon>Deinococci</taxon>
        <taxon>Deinococcales</taxon>
        <taxon>Deinococcaceae</taxon>
        <taxon>Deinococcus</taxon>
    </lineage>
</organism>
<dbReference type="EC" id="1.2.1.38" evidence="1"/>
<dbReference type="EMBL" id="AE000513">
    <property type="protein sequence ID" value="AAF09671.1"/>
    <property type="molecule type" value="Genomic_DNA"/>
</dbReference>
<dbReference type="PIR" id="D75562">
    <property type="entry name" value="D75562"/>
</dbReference>
<dbReference type="RefSeq" id="NP_293804.1">
    <property type="nucleotide sequence ID" value="NC_001263.1"/>
</dbReference>
<dbReference type="RefSeq" id="WP_010886726.1">
    <property type="nucleotide sequence ID" value="NC_001263.1"/>
</dbReference>
<dbReference type="SMR" id="Q9RY72"/>
<dbReference type="STRING" id="243230.DR_0078"/>
<dbReference type="PaxDb" id="243230-DR_0078"/>
<dbReference type="EnsemblBacteria" id="AAF09671">
    <property type="protein sequence ID" value="AAF09671"/>
    <property type="gene ID" value="DR_0078"/>
</dbReference>
<dbReference type="GeneID" id="69516308"/>
<dbReference type="KEGG" id="dra:DR_0078"/>
<dbReference type="PATRIC" id="fig|243230.17.peg.241"/>
<dbReference type="eggNOG" id="COG0002">
    <property type="taxonomic scope" value="Bacteria"/>
</dbReference>
<dbReference type="HOGENOM" id="CLU_077118_0_0_0"/>
<dbReference type="InParanoid" id="Q9RY72"/>
<dbReference type="OrthoDB" id="9801289at2"/>
<dbReference type="UniPathway" id="UPA00068">
    <property type="reaction ID" value="UER00108"/>
</dbReference>
<dbReference type="Proteomes" id="UP000002524">
    <property type="component" value="Chromosome 1"/>
</dbReference>
<dbReference type="GO" id="GO:0005737">
    <property type="term" value="C:cytoplasm"/>
    <property type="evidence" value="ECO:0007669"/>
    <property type="project" value="UniProtKB-SubCell"/>
</dbReference>
<dbReference type="GO" id="GO:0003942">
    <property type="term" value="F:N-acetyl-gamma-glutamyl-phosphate reductase activity"/>
    <property type="evidence" value="ECO:0007669"/>
    <property type="project" value="UniProtKB-UniRule"/>
</dbReference>
<dbReference type="GO" id="GO:0051287">
    <property type="term" value="F:NAD binding"/>
    <property type="evidence" value="ECO:0007669"/>
    <property type="project" value="InterPro"/>
</dbReference>
<dbReference type="GO" id="GO:0006526">
    <property type="term" value="P:L-arginine biosynthetic process"/>
    <property type="evidence" value="ECO:0007669"/>
    <property type="project" value="UniProtKB-UniRule"/>
</dbReference>
<dbReference type="CDD" id="cd23935">
    <property type="entry name" value="AGPR_2_C"/>
    <property type="match status" value="1"/>
</dbReference>
<dbReference type="CDD" id="cd17896">
    <property type="entry name" value="AGPR_2_N"/>
    <property type="match status" value="1"/>
</dbReference>
<dbReference type="Gene3D" id="3.30.360.10">
    <property type="entry name" value="Dihydrodipicolinate Reductase, domain 2"/>
    <property type="match status" value="1"/>
</dbReference>
<dbReference type="Gene3D" id="3.40.50.720">
    <property type="entry name" value="NAD(P)-binding Rossmann-like Domain"/>
    <property type="match status" value="1"/>
</dbReference>
<dbReference type="HAMAP" id="MF_01110">
    <property type="entry name" value="ArgC_type2"/>
    <property type="match status" value="1"/>
</dbReference>
<dbReference type="InterPro" id="IPR023013">
    <property type="entry name" value="AGPR_AS"/>
</dbReference>
<dbReference type="InterPro" id="IPR010136">
    <property type="entry name" value="AGPR_type-2"/>
</dbReference>
<dbReference type="InterPro" id="IPR036291">
    <property type="entry name" value="NAD(P)-bd_dom_sf"/>
</dbReference>
<dbReference type="InterPro" id="IPR050085">
    <property type="entry name" value="NAGSA_dehydrogenase"/>
</dbReference>
<dbReference type="InterPro" id="IPR000534">
    <property type="entry name" value="Semialdehyde_DH_NAD-bd"/>
</dbReference>
<dbReference type="NCBIfam" id="TIGR01851">
    <property type="entry name" value="argC_other"/>
    <property type="match status" value="1"/>
</dbReference>
<dbReference type="PANTHER" id="PTHR32338:SF10">
    <property type="entry name" value="N-ACETYL-GAMMA-GLUTAMYL-PHOSPHATE REDUCTASE, CHLOROPLASTIC-RELATED"/>
    <property type="match status" value="1"/>
</dbReference>
<dbReference type="PANTHER" id="PTHR32338">
    <property type="entry name" value="N-ACETYL-GAMMA-GLUTAMYL-PHOSPHATE REDUCTASE, CHLOROPLASTIC-RELATED-RELATED"/>
    <property type="match status" value="1"/>
</dbReference>
<dbReference type="Pfam" id="PF22698">
    <property type="entry name" value="Semialdhyde_dhC_1"/>
    <property type="match status" value="1"/>
</dbReference>
<dbReference type="SMART" id="SM00859">
    <property type="entry name" value="Semialdhyde_dh"/>
    <property type="match status" value="1"/>
</dbReference>
<dbReference type="SUPFAM" id="SSF55347">
    <property type="entry name" value="Glyceraldehyde-3-phosphate dehydrogenase-like, C-terminal domain"/>
    <property type="match status" value="1"/>
</dbReference>
<dbReference type="SUPFAM" id="SSF51735">
    <property type="entry name" value="NAD(P)-binding Rossmann-fold domains"/>
    <property type="match status" value="1"/>
</dbReference>
<dbReference type="PROSITE" id="PS01224">
    <property type="entry name" value="ARGC"/>
    <property type="match status" value="1"/>
</dbReference>
<gene>
    <name evidence="1" type="primary">argC</name>
    <name type="ordered locus">DR_0078</name>
</gene>
<accession>Q9RY72</accession>
<keyword id="KW-0028">Amino-acid biosynthesis</keyword>
<keyword id="KW-0055">Arginine biosynthesis</keyword>
<keyword id="KW-0963">Cytoplasm</keyword>
<keyword id="KW-0521">NADP</keyword>
<keyword id="KW-0560">Oxidoreductase</keyword>
<keyword id="KW-1185">Reference proteome</keyword>
<feature type="chain" id="PRO_0000112507" description="N-acetyl-gamma-glutamyl-phosphate reductase">
    <location>
        <begin position="1"/>
        <end position="306"/>
    </location>
</feature>
<feature type="active site" evidence="1">
    <location>
        <position position="117"/>
    </location>
</feature>
<proteinExistence type="inferred from homology"/>